<feature type="chain" id="PRO_0000251309" description="Large ribosomal subunit protein uL18">
    <location>
        <begin position="1"/>
        <end position="120"/>
    </location>
</feature>
<evidence type="ECO:0000255" key="1">
    <source>
        <dbReference type="HAMAP-Rule" id="MF_01337"/>
    </source>
</evidence>
<evidence type="ECO:0000305" key="2"/>
<keyword id="KW-1185">Reference proteome</keyword>
<keyword id="KW-0687">Ribonucleoprotein</keyword>
<keyword id="KW-0689">Ribosomal protein</keyword>
<keyword id="KW-0694">RNA-binding</keyword>
<keyword id="KW-0699">rRNA-binding</keyword>
<comment type="function">
    <text evidence="1">This is one of the proteins that bind and probably mediate the attachment of the 5S RNA into the large ribosomal subunit, where it forms part of the central protuberance.</text>
</comment>
<comment type="subunit">
    <text evidence="1">Part of the 50S ribosomal subunit; part of the 5S rRNA/L5/L18/L25 subcomplex. Contacts the 5S and 23S rRNAs.</text>
</comment>
<comment type="similarity">
    <text evidence="1">Belongs to the universal ribosomal protein uL18 family.</text>
</comment>
<accession>Q30Z58</accession>
<sequence>MKLTKNESRMRRKIRIRKKVSGNGARPRLVVYRSNLHIYAQLVDDQTGTTLAATSTLALGKQNGNALRLTVDNASLVGKEIAKLAKEKNIERVVFDRNGYIYHGRIKAVADGAREAGLEF</sequence>
<name>RL18_OLEA2</name>
<organism>
    <name type="scientific">Oleidesulfovibrio alaskensis (strain ATCC BAA-1058 / DSM 17464 / G20)</name>
    <name type="common">Desulfovibrio alaskensis</name>
    <dbReference type="NCBI Taxonomy" id="207559"/>
    <lineage>
        <taxon>Bacteria</taxon>
        <taxon>Pseudomonadati</taxon>
        <taxon>Thermodesulfobacteriota</taxon>
        <taxon>Desulfovibrionia</taxon>
        <taxon>Desulfovibrionales</taxon>
        <taxon>Desulfovibrionaceae</taxon>
        <taxon>Oleidesulfovibrio</taxon>
    </lineage>
</organism>
<proteinExistence type="inferred from homology"/>
<gene>
    <name evidence="1" type="primary">rplR</name>
    <name type="ordered locus">Dde_2241</name>
</gene>
<dbReference type="EMBL" id="CP000112">
    <property type="protein sequence ID" value="ABB39038.1"/>
    <property type="molecule type" value="Genomic_DNA"/>
</dbReference>
<dbReference type="RefSeq" id="WP_011368129.1">
    <property type="nucleotide sequence ID" value="NC_007519.1"/>
</dbReference>
<dbReference type="SMR" id="Q30Z58"/>
<dbReference type="STRING" id="207559.Dde_2241"/>
<dbReference type="KEGG" id="dde:Dde_2241"/>
<dbReference type="eggNOG" id="COG0256">
    <property type="taxonomic scope" value="Bacteria"/>
</dbReference>
<dbReference type="HOGENOM" id="CLU_098841_0_1_7"/>
<dbReference type="Proteomes" id="UP000002710">
    <property type="component" value="Chromosome"/>
</dbReference>
<dbReference type="GO" id="GO:0022625">
    <property type="term" value="C:cytosolic large ribosomal subunit"/>
    <property type="evidence" value="ECO:0007669"/>
    <property type="project" value="TreeGrafter"/>
</dbReference>
<dbReference type="GO" id="GO:0008097">
    <property type="term" value="F:5S rRNA binding"/>
    <property type="evidence" value="ECO:0007669"/>
    <property type="project" value="TreeGrafter"/>
</dbReference>
<dbReference type="GO" id="GO:0003735">
    <property type="term" value="F:structural constituent of ribosome"/>
    <property type="evidence" value="ECO:0007669"/>
    <property type="project" value="InterPro"/>
</dbReference>
<dbReference type="GO" id="GO:0006412">
    <property type="term" value="P:translation"/>
    <property type="evidence" value="ECO:0007669"/>
    <property type="project" value="UniProtKB-UniRule"/>
</dbReference>
<dbReference type="CDD" id="cd00432">
    <property type="entry name" value="Ribosomal_L18_L5e"/>
    <property type="match status" value="1"/>
</dbReference>
<dbReference type="FunFam" id="3.30.420.100:FF:000001">
    <property type="entry name" value="50S ribosomal protein L18"/>
    <property type="match status" value="1"/>
</dbReference>
<dbReference type="Gene3D" id="3.30.420.100">
    <property type="match status" value="1"/>
</dbReference>
<dbReference type="HAMAP" id="MF_01337_B">
    <property type="entry name" value="Ribosomal_uL18_B"/>
    <property type="match status" value="1"/>
</dbReference>
<dbReference type="InterPro" id="IPR004389">
    <property type="entry name" value="Ribosomal_uL18_bac-type"/>
</dbReference>
<dbReference type="InterPro" id="IPR005484">
    <property type="entry name" value="Ribosomal_uL18_bac/euk"/>
</dbReference>
<dbReference type="NCBIfam" id="TIGR00060">
    <property type="entry name" value="L18_bact"/>
    <property type="match status" value="1"/>
</dbReference>
<dbReference type="PANTHER" id="PTHR12899">
    <property type="entry name" value="39S RIBOSOMAL PROTEIN L18, MITOCHONDRIAL"/>
    <property type="match status" value="1"/>
</dbReference>
<dbReference type="PANTHER" id="PTHR12899:SF3">
    <property type="entry name" value="LARGE RIBOSOMAL SUBUNIT PROTEIN UL18M"/>
    <property type="match status" value="1"/>
</dbReference>
<dbReference type="Pfam" id="PF00861">
    <property type="entry name" value="Ribosomal_L18p"/>
    <property type="match status" value="1"/>
</dbReference>
<dbReference type="SUPFAM" id="SSF53137">
    <property type="entry name" value="Translational machinery components"/>
    <property type="match status" value="1"/>
</dbReference>
<protein>
    <recommendedName>
        <fullName evidence="1">Large ribosomal subunit protein uL18</fullName>
    </recommendedName>
    <alternativeName>
        <fullName evidence="2">50S ribosomal protein L18</fullName>
    </alternativeName>
</protein>
<reference key="1">
    <citation type="journal article" date="2011" name="J. Bacteriol.">
        <title>Complete genome sequence and updated annotation of Desulfovibrio alaskensis G20.</title>
        <authorList>
            <person name="Hauser L.J."/>
            <person name="Land M.L."/>
            <person name="Brown S.D."/>
            <person name="Larimer F."/>
            <person name="Keller K.L."/>
            <person name="Rapp-Giles B.J."/>
            <person name="Price M.N."/>
            <person name="Lin M."/>
            <person name="Bruce D.C."/>
            <person name="Detter J.C."/>
            <person name="Tapia R."/>
            <person name="Han C.S."/>
            <person name="Goodwin L.A."/>
            <person name="Cheng J.F."/>
            <person name="Pitluck S."/>
            <person name="Copeland A."/>
            <person name="Lucas S."/>
            <person name="Nolan M."/>
            <person name="Lapidus A.L."/>
            <person name="Palumbo A.V."/>
            <person name="Wall J.D."/>
        </authorList>
    </citation>
    <scope>NUCLEOTIDE SEQUENCE [LARGE SCALE GENOMIC DNA]</scope>
    <source>
        <strain>ATCC BAA-1058 / DSM 17464 / G20</strain>
    </source>
</reference>